<dbReference type="EMBL" id="AF159701">
    <property type="protein sequence ID" value="AAF76524.1"/>
    <property type="molecule type" value="mRNA"/>
</dbReference>
<dbReference type="SMR" id="P62811"/>
<dbReference type="FunCoup" id="P62811">
    <property type="interactions" value="3"/>
</dbReference>
<dbReference type="MEROPS" id="I17.004"/>
<dbReference type="InParanoid" id="P62811"/>
<dbReference type="Proteomes" id="UP000009136">
    <property type="component" value="Unplaced"/>
</dbReference>
<dbReference type="GO" id="GO:0005615">
    <property type="term" value="C:extracellular space"/>
    <property type="evidence" value="ECO:0000318"/>
    <property type="project" value="GO_Central"/>
</dbReference>
<dbReference type="GO" id="GO:0004867">
    <property type="term" value="F:serine-type endopeptidase inhibitor activity"/>
    <property type="evidence" value="ECO:0000318"/>
    <property type="project" value="GO_Central"/>
</dbReference>
<dbReference type="GO" id="GO:0019731">
    <property type="term" value="P:antibacterial humoral response"/>
    <property type="evidence" value="ECO:0000318"/>
    <property type="project" value="GO_Central"/>
</dbReference>
<dbReference type="GO" id="GO:0045087">
    <property type="term" value="P:innate immune response"/>
    <property type="evidence" value="ECO:0000318"/>
    <property type="project" value="GO_Central"/>
</dbReference>
<dbReference type="CDD" id="cd00199">
    <property type="entry name" value="WAP"/>
    <property type="match status" value="1"/>
</dbReference>
<dbReference type="FunFam" id="4.10.75.10:FF:000001">
    <property type="entry name" value="Anosmin 1"/>
    <property type="match status" value="1"/>
</dbReference>
<dbReference type="Gene3D" id="4.10.75.10">
    <property type="entry name" value="Elafin-like"/>
    <property type="match status" value="1"/>
</dbReference>
<dbReference type="InterPro" id="IPR036645">
    <property type="entry name" value="Elafin-like_sf"/>
</dbReference>
<dbReference type="InterPro" id="IPR008197">
    <property type="entry name" value="WAP_dom"/>
</dbReference>
<dbReference type="InterPro" id="IPR050514">
    <property type="entry name" value="WAP_four-disulfide_core"/>
</dbReference>
<dbReference type="PANTHER" id="PTHR19441:SF92">
    <property type="entry name" value="WAP FOUR-DISULFIDE CORE DOMAIN PROTEIN 18"/>
    <property type="match status" value="1"/>
</dbReference>
<dbReference type="PANTHER" id="PTHR19441">
    <property type="entry name" value="WHEY ACDIC PROTEIN WAP"/>
    <property type="match status" value="1"/>
</dbReference>
<dbReference type="Pfam" id="PF00095">
    <property type="entry name" value="WAP"/>
    <property type="match status" value="1"/>
</dbReference>
<dbReference type="PRINTS" id="PR00003">
    <property type="entry name" value="4DISULPHCORE"/>
</dbReference>
<dbReference type="SMART" id="SM00217">
    <property type="entry name" value="WAP"/>
    <property type="match status" value="1"/>
</dbReference>
<dbReference type="SUPFAM" id="SSF57256">
    <property type="entry name" value="Elafin-like"/>
    <property type="match status" value="1"/>
</dbReference>
<dbReference type="PROSITE" id="PS51390">
    <property type="entry name" value="WAP"/>
    <property type="match status" value="1"/>
</dbReference>
<feature type="signal peptide" evidence="1">
    <location>
        <begin position="1"/>
        <end position="24"/>
    </location>
</feature>
<feature type="chain" id="PRO_0000041375" description="WAP four-disulfide core domain protein 18">
    <location>
        <begin position="25"/>
        <end position="74"/>
    </location>
</feature>
<feature type="domain" description="WAP" evidence="2">
    <location>
        <begin position="26"/>
        <end position="73"/>
    </location>
</feature>
<evidence type="ECO:0000255" key="1"/>
<evidence type="ECO:0000255" key="2">
    <source>
        <dbReference type="PROSITE-ProRule" id="PRU00722"/>
    </source>
</evidence>
<evidence type="ECO:0000305" key="3"/>
<name>WFD18_BOVIN</name>
<accession>P62811</accession>
<accession>Q62477</accession>
<gene>
    <name type="primary">WFDC18</name>
    <name type="synonym">EXPI</name>
    <name type="synonym">WDNM1</name>
</gene>
<organism>
    <name type="scientific">Bos taurus</name>
    <name type="common">Bovine</name>
    <dbReference type="NCBI Taxonomy" id="9913"/>
    <lineage>
        <taxon>Eukaryota</taxon>
        <taxon>Metazoa</taxon>
        <taxon>Chordata</taxon>
        <taxon>Craniata</taxon>
        <taxon>Vertebrata</taxon>
        <taxon>Euteleostomi</taxon>
        <taxon>Mammalia</taxon>
        <taxon>Eutheria</taxon>
        <taxon>Laurasiatheria</taxon>
        <taxon>Artiodactyla</taxon>
        <taxon>Ruminantia</taxon>
        <taxon>Pecora</taxon>
        <taxon>Bovidae</taxon>
        <taxon>Bovinae</taxon>
        <taxon>Bos</taxon>
    </lineage>
</organism>
<reference key="1">
    <citation type="submission" date="1999-06" db="EMBL/GenBank/DDBJ databases">
        <title>Cloning and characterization of involution specific genes in bovine mammary gland.</title>
        <authorList>
            <person name="Kho Y.J."/>
            <person name="Lee D.Y."/>
            <person name="Choi Y.J."/>
            <person name="Baik M.G."/>
        </authorList>
    </citation>
    <scope>NUCLEOTIDE SEQUENCE [MRNA]</scope>
    <source>
        <tissue>Mammary gland</tissue>
    </source>
</reference>
<proteinExistence type="inferred from homology"/>
<keyword id="KW-0646">Protease inhibitor</keyword>
<keyword id="KW-1185">Reference proteome</keyword>
<keyword id="KW-0964">Secreted</keyword>
<keyword id="KW-0732">Signal</keyword>
<protein>
    <recommendedName>
        <fullName>WAP four-disulfide core domain protein 18</fullName>
    </recommendedName>
    <alternativeName>
        <fullName>Extracellular peptidase inhibitor</fullName>
    </alternativeName>
    <alternativeName>
        <fullName>Protein WDNM1</fullName>
    </alternativeName>
</protein>
<sequence>MKTATVFVLVALIFMTMTTAWALSNPKEKPGACPKPPPRSFGTCDERCTGDGSCSGNMKCCSNGCGHACKPPVF</sequence>
<comment type="function">
    <text>Could have proteinase inhibiting capacity.</text>
</comment>
<comment type="subcellular location">
    <subcellularLocation>
        <location evidence="3">Secreted</location>
    </subcellularLocation>
</comment>